<proteinExistence type="inferred from homology"/>
<feature type="chain" id="PRO_1000140503" description="Small ribosomal subunit protein uS8">
    <location>
        <begin position="1"/>
        <end position="130"/>
    </location>
</feature>
<protein>
    <recommendedName>
        <fullName evidence="1">Small ribosomal subunit protein uS8</fullName>
    </recommendedName>
    <alternativeName>
        <fullName evidence="2">30S ribosomal protein S8</fullName>
    </alternativeName>
</protein>
<evidence type="ECO:0000255" key="1">
    <source>
        <dbReference type="HAMAP-Rule" id="MF_01302"/>
    </source>
</evidence>
<evidence type="ECO:0000305" key="2"/>
<comment type="function">
    <text evidence="1">One of the primary rRNA binding proteins, it binds directly to 16S rRNA central domain where it helps coordinate assembly of the platform of the 30S subunit.</text>
</comment>
<comment type="subunit">
    <text evidence="1">Part of the 30S ribosomal subunit. Contacts proteins S5 and S12.</text>
</comment>
<comment type="similarity">
    <text evidence="1">Belongs to the universal ribosomal protein uS8 family.</text>
</comment>
<name>RS8_ALISL</name>
<accession>B6EPT9</accession>
<sequence length="130" mass="13996">MSMQDPISDMLTRVRNGQSANKVAVKMPSSKLKVAIAALLKAEGYIADFAVEGDIKPELEITLKYFQAKQVIEQIQRVSRPGLRVYKKNDALPSVMGGLGIAVISTSKGLMSDRAARKAGLGGEIICYVA</sequence>
<organism>
    <name type="scientific">Aliivibrio salmonicida (strain LFI1238)</name>
    <name type="common">Vibrio salmonicida (strain LFI1238)</name>
    <dbReference type="NCBI Taxonomy" id="316275"/>
    <lineage>
        <taxon>Bacteria</taxon>
        <taxon>Pseudomonadati</taxon>
        <taxon>Pseudomonadota</taxon>
        <taxon>Gammaproteobacteria</taxon>
        <taxon>Vibrionales</taxon>
        <taxon>Vibrionaceae</taxon>
        <taxon>Aliivibrio</taxon>
    </lineage>
</organism>
<keyword id="KW-0687">Ribonucleoprotein</keyword>
<keyword id="KW-0689">Ribosomal protein</keyword>
<keyword id="KW-0694">RNA-binding</keyword>
<keyword id="KW-0699">rRNA-binding</keyword>
<dbReference type="EMBL" id="FM178379">
    <property type="protein sequence ID" value="CAQ78019.1"/>
    <property type="molecule type" value="Genomic_DNA"/>
</dbReference>
<dbReference type="RefSeq" id="WP_012549163.1">
    <property type="nucleotide sequence ID" value="NC_011312.1"/>
</dbReference>
<dbReference type="SMR" id="B6EPT9"/>
<dbReference type="KEGG" id="vsa:VSAL_I0334"/>
<dbReference type="eggNOG" id="COG0096">
    <property type="taxonomic scope" value="Bacteria"/>
</dbReference>
<dbReference type="HOGENOM" id="CLU_098428_0_0_6"/>
<dbReference type="Proteomes" id="UP000001730">
    <property type="component" value="Chromosome 1"/>
</dbReference>
<dbReference type="GO" id="GO:1990904">
    <property type="term" value="C:ribonucleoprotein complex"/>
    <property type="evidence" value="ECO:0007669"/>
    <property type="project" value="UniProtKB-KW"/>
</dbReference>
<dbReference type="GO" id="GO:0005840">
    <property type="term" value="C:ribosome"/>
    <property type="evidence" value="ECO:0007669"/>
    <property type="project" value="UniProtKB-KW"/>
</dbReference>
<dbReference type="GO" id="GO:0019843">
    <property type="term" value="F:rRNA binding"/>
    <property type="evidence" value="ECO:0007669"/>
    <property type="project" value="UniProtKB-UniRule"/>
</dbReference>
<dbReference type="GO" id="GO:0003735">
    <property type="term" value="F:structural constituent of ribosome"/>
    <property type="evidence" value="ECO:0007669"/>
    <property type="project" value="InterPro"/>
</dbReference>
<dbReference type="GO" id="GO:0006412">
    <property type="term" value="P:translation"/>
    <property type="evidence" value="ECO:0007669"/>
    <property type="project" value="UniProtKB-UniRule"/>
</dbReference>
<dbReference type="FunFam" id="3.30.1370.30:FF:000003">
    <property type="entry name" value="30S ribosomal protein S8"/>
    <property type="match status" value="1"/>
</dbReference>
<dbReference type="FunFam" id="3.30.1490.10:FF:000001">
    <property type="entry name" value="30S ribosomal protein S8"/>
    <property type="match status" value="1"/>
</dbReference>
<dbReference type="Gene3D" id="3.30.1370.30">
    <property type="match status" value="1"/>
</dbReference>
<dbReference type="Gene3D" id="3.30.1490.10">
    <property type="match status" value="1"/>
</dbReference>
<dbReference type="HAMAP" id="MF_01302_B">
    <property type="entry name" value="Ribosomal_uS8_B"/>
    <property type="match status" value="1"/>
</dbReference>
<dbReference type="InterPro" id="IPR000630">
    <property type="entry name" value="Ribosomal_uS8"/>
</dbReference>
<dbReference type="InterPro" id="IPR047863">
    <property type="entry name" value="Ribosomal_uS8_CS"/>
</dbReference>
<dbReference type="InterPro" id="IPR035987">
    <property type="entry name" value="Ribosomal_uS8_sf"/>
</dbReference>
<dbReference type="NCBIfam" id="NF001109">
    <property type="entry name" value="PRK00136.1"/>
    <property type="match status" value="1"/>
</dbReference>
<dbReference type="PANTHER" id="PTHR11758">
    <property type="entry name" value="40S RIBOSOMAL PROTEIN S15A"/>
    <property type="match status" value="1"/>
</dbReference>
<dbReference type="Pfam" id="PF00410">
    <property type="entry name" value="Ribosomal_S8"/>
    <property type="match status" value="1"/>
</dbReference>
<dbReference type="SUPFAM" id="SSF56047">
    <property type="entry name" value="Ribosomal protein S8"/>
    <property type="match status" value="1"/>
</dbReference>
<dbReference type="PROSITE" id="PS00053">
    <property type="entry name" value="RIBOSOMAL_S8"/>
    <property type="match status" value="1"/>
</dbReference>
<reference key="1">
    <citation type="journal article" date="2008" name="BMC Genomics">
        <title>The genome sequence of the fish pathogen Aliivibrio salmonicida strain LFI1238 shows extensive evidence of gene decay.</title>
        <authorList>
            <person name="Hjerde E."/>
            <person name="Lorentzen M.S."/>
            <person name="Holden M.T."/>
            <person name="Seeger K."/>
            <person name="Paulsen S."/>
            <person name="Bason N."/>
            <person name="Churcher C."/>
            <person name="Harris D."/>
            <person name="Norbertczak H."/>
            <person name="Quail M.A."/>
            <person name="Sanders S."/>
            <person name="Thurston S."/>
            <person name="Parkhill J."/>
            <person name="Willassen N.P."/>
            <person name="Thomson N.R."/>
        </authorList>
    </citation>
    <scope>NUCLEOTIDE SEQUENCE [LARGE SCALE GENOMIC DNA]</scope>
    <source>
        <strain>LFI1238</strain>
    </source>
</reference>
<gene>
    <name evidence="1" type="primary">rpsH</name>
    <name type="ordered locus">VSAL_I0334</name>
</gene>